<evidence type="ECO:0000255" key="1">
    <source>
        <dbReference type="HAMAP-Rule" id="MF_01417"/>
    </source>
</evidence>
<sequence>MERWSINDSAKIYNLPNWGADLFSINKKGNVCVHPSPTSKHSIDLRALVDDLIKRKIKPPILLRFMDVLQGRIAAINRAFKYAIDENDYPSTYQTFYPIKVNQQRQVVEAIAKFGKRYNIGIEVGSKPELVIGISFATGNGIPIICNGYKDKEYIETVLYATKIGYDITIVVEKMFELEKIIALSKKTGIKPKLGIRVKLSSKGTGKWATSGGEDAKFGLRMSEIIAAIGLLEQNELLDSVKLIHFHIGSQITKIDKIKSALIEGTRVYAEMRKLGVGIEYVDIGGGLGVDYDGSKSSYFSSVNYSIEEYANDVIYQIKNICEDAGVECPNIISESGRATAAHYSVLVTNLLNTNTQNLMPDFEETLNGAEKLAPTVKKLVDIYKSIDRYSLREDYHDTVQLIQEAVSLFSLGYLTLAERAMAEWLHGKILRKINGIVEKIKPIPEELQNFQLSLRQTYFANFSLFQSIPDSWAIDQLFPIVPIQRLNQKPDVMASIADITCDSDGEITSFVGENGRTKYLPLHKIRKDEDYFVGFFLIGAYQEILGDMHNLFGDTNAVHVTFNKKTGYKIDTVINGDATWESLKYVQYKGPEILKHVRDTMEKDVALRKVSIEESSHFLELLDRTLLGYTYLGE</sequence>
<feature type="chain" id="PRO_1000068490" description="Biosynthetic arginine decarboxylase">
    <location>
        <begin position="1"/>
        <end position="635"/>
    </location>
</feature>
<feature type="binding site" evidence="1">
    <location>
        <begin position="282"/>
        <end position="292"/>
    </location>
    <ligand>
        <name>substrate</name>
    </ligand>
</feature>
<feature type="modified residue" description="N6-(pyridoxal phosphate)lysine" evidence="1">
    <location>
        <position position="100"/>
    </location>
</feature>
<dbReference type="EC" id="4.1.1.19" evidence="1"/>
<dbReference type="EMBL" id="CP000148">
    <property type="protein sequence ID" value="ABB31146.1"/>
    <property type="molecule type" value="Genomic_DNA"/>
</dbReference>
<dbReference type="RefSeq" id="WP_004513934.1">
    <property type="nucleotide sequence ID" value="NC_007517.1"/>
</dbReference>
<dbReference type="SMR" id="Q39X78"/>
<dbReference type="STRING" id="269799.Gmet_0904"/>
<dbReference type="KEGG" id="gme:Gmet_0904"/>
<dbReference type="eggNOG" id="COG1166">
    <property type="taxonomic scope" value="Bacteria"/>
</dbReference>
<dbReference type="HOGENOM" id="CLU_027243_1_0_7"/>
<dbReference type="UniPathway" id="UPA00186">
    <property type="reaction ID" value="UER00284"/>
</dbReference>
<dbReference type="Proteomes" id="UP000007073">
    <property type="component" value="Chromosome"/>
</dbReference>
<dbReference type="GO" id="GO:0008792">
    <property type="term" value="F:arginine decarboxylase activity"/>
    <property type="evidence" value="ECO:0007669"/>
    <property type="project" value="UniProtKB-UniRule"/>
</dbReference>
<dbReference type="GO" id="GO:0046872">
    <property type="term" value="F:metal ion binding"/>
    <property type="evidence" value="ECO:0007669"/>
    <property type="project" value="UniProtKB-KW"/>
</dbReference>
<dbReference type="GO" id="GO:0006527">
    <property type="term" value="P:arginine catabolic process"/>
    <property type="evidence" value="ECO:0007669"/>
    <property type="project" value="InterPro"/>
</dbReference>
<dbReference type="GO" id="GO:0033388">
    <property type="term" value="P:putrescine biosynthetic process from arginine"/>
    <property type="evidence" value="ECO:0007669"/>
    <property type="project" value="TreeGrafter"/>
</dbReference>
<dbReference type="GO" id="GO:0008295">
    <property type="term" value="P:spermidine biosynthetic process"/>
    <property type="evidence" value="ECO:0007669"/>
    <property type="project" value="UniProtKB-UniRule"/>
</dbReference>
<dbReference type="CDD" id="cd06830">
    <property type="entry name" value="PLPDE_III_ADC"/>
    <property type="match status" value="1"/>
</dbReference>
<dbReference type="FunFam" id="1.20.58.930:FF:000002">
    <property type="entry name" value="Biosynthetic arginine decarboxylase"/>
    <property type="match status" value="1"/>
</dbReference>
<dbReference type="Gene3D" id="1.10.287.3440">
    <property type="match status" value="1"/>
</dbReference>
<dbReference type="Gene3D" id="1.20.58.930">
    <property type="match status" value="1"/>
</dbReference>
<dbReference type="Gene3D" id="3.20.20.10">
    <property type="entry name" value="Alanine racemase"/>
    <property type="match status" value="1"/>
</dbReference>
<dbReference type="Gene3D" id="2.40.37.10">
    <property type="entry name" value="Lyase, Ornithine Decarboxylase, Chain A, domain 1"/>
    <property type="match status" value="1"/>
</dbReference>
<dbReference type="HAMAP" id="MF_01417">
    <property type="entry name" value="SpeA"/>
    <property type="match status" value="1"/>
</dbReference>
<dbReference type="InterPro" id="IPR009006">
    <property type="entry name" value="Ala_racemase/Decarboxylase_C"/>
</dbReference>
<dbReference type="InterPro" id="IPR040634">
    <property type="entry name" value="Arg_decarb_HB"/>
</dbReference>
<dbReference type="InterPro" id="IPR041128">
    <property type="entry name" value="Arg_decarbox_C"/>
</dbReference>
<dbReference type="InterPro" id="IPR002985">
    <property type="entry name" value="Arg_decrbxlase"/>
</dbReference>
<dbReference type="InterPro" id="IPR022657">
    <property type="entry name" value="De-COase2_CS"/>
</dbReference>
<dbReference type="InterPro" id="IPR022644">
    <property type="entry name" value="De-COase2_N"/>
</dbReference>
<dbReference type="InterPro" id="IPR022653">
    <property type="entry name" value="De-COase2_pyr-phos_BS"/>
</dbReference>
<dbReference type="InterPro" id="IPR000183">
    <property type="entry name" value="Orn/DAP/Arg_de-COase"/>
</dbReference>
<dbReference type="InterPro" id="IPR029066">
    <property type="entry name" value="PLP-binding_barrel"/>
</dbReference>
<dbReference type="NCBIfam" id="NF003763">
    <property type="entry name" value="PRK05354.1"/>
    <property type="match status" value="1"/>
</dbReference>
<dbReference type="NCBIfam" id="TIGR01273">
    <property type="entry name" value="speA"/>
    <property type="match status" value="1"/>
</dbReference>
<dbReference type="PANTHER" id="PTHR43295">
    <property type="entry name" value="ARGININE DECARBOXYLASE"/>
    <property type="match status" value="1"/>
</dbReference>
<dbReference type="PANTHER" id="PTHR43295:SF9">
    <property type="entry name" value="BIOSYNTHETIC ARGININE DECARBOXYLASE"/>
    <property type="match status" value="1"/>
</dbReference>
<dbReference type="Pfam" id="PF17810">
    <property type="entry name" value="Arg_decarb_HB"/>
    <property type="match status" value="1"/>
</dbReference>
<dbReference type="Pfam" id="PF17944">
    <property type="entry name" value="Arg_decarbox_C"/>
    <property type="match status" value="1"/>
</dbReference>
<dbReference type="Pfam" id="PF02784">
    <property type="entry name" value="Orn_Arg_deC_N"/>
    <property type="match status" value="1"/>
</dbReference>
<dbReference type="PIRSF" id="PIRSF001336">
    <property type="entry name" value="Arg_decrbxlase"/>
    <property type="match status" value="1"/>
</dbReference>
<dbReference type="PRINTS" id="PR01180">
    <property type="entry name" value="ARGDCRBXLASE"/>
</dbReference>
<dbReference type="PRINTS" id="PR01179">
    <property type="entry name" value="ODADCRBXLASE"/>
</dbReference>
<dbReference type="SUPFAM" id="SSF50621">
    <property type="entry name" value="Alanine racemase C-terminal domain-like"/>
    <property type="match status" value="1"/>
</dbReference>
<dbReference type="SUPFAM" id="SSF51419">
    <property type="entry name" value="PLP-binding barrel"/>
    <property type="match status" value="1"/>
</dbReference>
<dbReference type="PROSITE" id="PS00878">
    <property type="entry name" value="ODR_DC_2_1"/>
    <property type="match status" value="1"/>
</dbReference>
<dbReference type="PROSITE" id="PS00879">
    <property type="entry name" value="ODR_DC_2_2"/>
    <property type="match status" value="1"/>
</dbReference>
<accession>Q39X78</accession>
<comment type="function">
    <text evidence="1">Catalyzes the biosynthesis of agmatine from arginine.</text>
</comment>
<comment type="catalytic activity">
    <reaction evidence="1">
        <text>L-arginine + H(+) = agmatine + CO2</text>
        <dbReference type="Rhea" id="RHEA:17641"/>
        <dbReference type="ChEBI" id="CHEBI:15378"/>
        <dbReference type="ChEBI" id="CHEBI:16526"/>
        <dbReference type="ChEBI" id="CHEBI:32682"/>
        <dbReference type="ChEBI" id="CHEBI:58145"/>
        <dbReference type="EC" id="4.1.1.19"/>
    </reaction>
</comment>
<comment type="cofactor">
    <cofactor evidence="1">
        <name>Mg(2+)</name>
        <dbReference type="ChEBI" id="CHEBI:18420"/>
    </cofactor>
</comment>
<comment type="cofactor">
    <cofactor evidence="1">
        <name>pyridoxal 5'-phosphate</name>
        <dbReference type="ChEBI" id="CHEBI:597326"/>
    </cofactor>
</comment>
<comment type="pathway">
    <text evidence="1">Amine and polyamine biosynthesis; agmatine biosynthesis; agmatine from L-arginine: step 1/1.</text>
</comment>
<comment type="similarity">
    <text evidence="1">Belongs to the Orn/Lys/Arg decarboxylase class-II family. SpeA subfamily.</text>
</comment>
<protein>
    <recommendedName>
        <fullName evidence="1">Biosynthetic arginine decarboxylase</fullName>
        <shortName evidence="1">ADC</shortName>
        <ecNumber evidence="1">4.1.1.19</ecNumber>
    </recommendedName>
</protein>
<gene>
    <name evidence="1" type="primary">speA</name>
    <name type="ordered locus">Gmet_0904</name>
</gene>
<organism>
    <name type="scientific">Geobacter metallireducens (strain ATCC 53774 / DSM 7210 / GS-15)</name>
    <dbReference type="NCBI Taxonomy" id="269799"/>
    <lineage>
        <taxon>Bacteria</taxon>
        <taxon>Pseudomonadati</taxon>
        <taxon>Thermodesulfobacteriota</taxon>
        <taxon>Desulfuromonadia</taxon>
        <taxon>Geobacterales</taxon>
        <taxon>Geobacteraceae</taxon>
        <taxon>Geobacter</taxon>
    </lineage>
</organism>
<keyword id="KW-0210">Decarboxylase</keyword>
<keyword id="KW-0456">Lyase</keyword>
<keyword id="KW-0460">Magnesium</keyword>
<keyword id="KW-0479">Metal-binding</keyword>
<keyword id="KW-0620">Polyamine biosynthesis</keyword>
<keyword id="KW-0663">Pyridoxal phosphate</keyword>
<keyword id="KW-1185">Reference proteome</keyword>
<keyword id="KW-0745">Spermidine biosynthesis</keyword>
<proteinExistence type="inferred from homology"/>
<name>SPEA_GEOMG</name>
<reference key="1">
    <citation type="journal article" date="2009" name="BMC Microbiol.">
        <title>The genome sequence of Geobacter metallireducens: features of metabolism, physiology and regulation common and dissimilar to Geobacter sulfurreducens.</title>
        <authorList>
            <person name="Aklujkar M."/>
            <person name="Krushkal J."/>
            <person name="DiBartolo G."/>
            <person name="Lapidus A."/>
            <person name="Land M.L."/>
            <person name="Lovley D.R."/>
        </authorList>
    </citation>
    <scope>NUCLEOTIDE SEQUENCE [LARGE SCALE GENOMIC DNA]</scope>
    <source>
        <strain>ATCC 53774 / DSM 7210 / GS-15</strain>
    </source>
</reference>